<protein>
    <recommendedName>
        <fullName evidence="1">Glucose-6-phosphate isomerase</fullName>
        <shortName evidence="1">GPI</shortName>
        <ecNumber evidence="1">5.3.1.9</ecNumber>
    </recommendedName>
    <alternativeName>
        <fullName evidence="1">Phosphoglucose isomerase</fullName>
        <shortName evidence="1">PGI</shortName>
    </alternativeName>
    <alternativeName>
        <fullName evidence="1">Phosphohexose isomerase</fullName>
        <shortName evidence="1">PHI</shortName>
    </alternativeName>
</protein>
<accession>B0TJ99</accession>
<name>G6PI_SHEHH</name>
<gene>
    <name evidence="1" type="primary">pgi</name>
    <name type="ordered locus">Shal_1121</name>
</gene>
<dbReference type="EC" id="5.3.1.9" evidence="1"/>
<dbReference type="EMBL" id="CP000931">
    <property type="protein sequence ID" value="ABZ75690.1"/>
    <property type="molecule type" value="Genomic_DNA"/>
</dbReference>
<dbReference type="RefSeq" id="WP_012276235.1">
    <property type="nucleotide sequence ID" value="NC_010334.1"/>
</dbReference>
<dbReference type="SMR" id="B0TJ99"/>
<dbReference type="STRING" id="458817.Shal_1121"/>
<dbReference type="KEGG" id="shl:Shal_1121"/>
<dbReference type="eggNOG" id="COG0166">
    <property type="taxonomic scope" value="Bacteria"/>
</dbReference>
<dbReference type="HOGENOM" id="CLU_017947_3_1_6"/>
<dbReference type="OrthoDB" id="140919at2"/>
<dbReference type="UniPathway" id="UPA00109">
    <property type="reaction ID" value="UER00181"/>
</dbReference>
<dbReference type="UniPathway" id="UPA00138"/>
<dbReference type="Proteomes" id="UP000001317">
    <property type="component" value="Chromosome"/>
</dbReference>
<dbReference type="GO" id="GO:0005829">
    <property type="term" value="C:cytosol"/>
    <property type="evidence" value="ECO:0007669"/>
    <property type="project" value="TreeGrafter"/>
</dbReference>
<dbReference type="GO" id="GO:0097367">
    <property type="term" value="F:carbohydrate derivative binding"/>
    <property type="evidence" value="ECO:0007669"/>
    <property type="project" value="InterPro"/>
</dbReference>
<dbReference type="GO" id="GO:0004347">
    <property type="term" value="F:glucose-6-phosphate isomerase activity"/>
    <property type="evidence" value="ECO:0007669"/>
    <property type="project" value="UniProtKB-UniRule"/>
</dbReference>
<dbReference type="GO" id="GO:0048029">
    <property type="term" value="F:monosaccharide binding"/>
    <property type="evidence" value="ECO:0007669"/>
    <property type="project" value="TreeGrafter"/>
</dbReference>
<dbReference type="GO" id="GO:0006094">
    <property type="term" value="P:gluconeogenesis"/>
    <property type="evidence" value="ECO:0007669"/>
    <property type="project" value="UniProtKB-UniRule"/>
</dbReference>
<dbReference type="GO" id="GO:0051156">
    <property type="term" value="P:glucose 6-phosphate metabolic process"/>
    <property type="evidence" value="ECO:0007669"/>
    <property type="project" value="TreeGrafter"/>
</dbReference>
<dbReference type="GO" id="GO:0006096">
    <property type="term" value="P:glycolytic process"/>
    <property type="evidence" value="ECO:0007669"/>
    <property type="project" value="UniProtKB-UniRule"/>
</dbReference>
<dbReference type="CDD" id="cd05015">
    <property type="entry name" value="SIS_PGI_1"/>
    <property type="match status" value="1"/>
</dbReference>
<dbReference type="CDD" id="cd05016">
    <property type="entry name" value="SIS_PGI_2"/>
    <property type="match status" value="1"/>
</dbReference>
<dbReference type="FunFam" id="3.40.50.10490:FF:000018">
    <property type="entry name" value="Glucose-6-phosphate isomerase"/>
    <property type="match status" value="1"/>
</dbReference>
<dbReference type="Gene3D" id="1.10.1390.10">
    <property type="match status" value="1"/>
</dbReference>
<dbReference type="Gene3D" id="3.40.50.10490">
    <property type="entry name" value="Glucose-6-phosphate isomerase like protein, domain 1"/>
    <property type="match status" value="2"/>
</dbReference>
<dbReference type="HAMAP" id="MF_00473">
    <property type="entry name" value="G6P_isomerase"/>
    <property type="match status" value="1"/>
</dbReference>
<dbReference type="InterPro" id="IPR001672">
    <property type="entry name" value="G6P_Isomerase"/>
</dbReference>
<dbReference type="InterPro" id="IPR023096">
    <property type="entry name" value="G6P_Isomerase_C"/>
</dbReference>
<dbReference type="InterPro" id="IPR018189">
    <property type="entry name" value="Phosphoglucose_isomerase_CS"/>
</dbReference>
<dbReference type="InterPro" id="IPR046348">
    <property type="entry name" value="SIS_dom_sf"/>
</dbReference>
<dbReference type="InterPro" id="IPR035476">
    <property type="entry name" value="SIS_PGI_1"/>
</dbReference>
<dbReference type="InterPro" id="IPR035482">
    <property type="entry name" value="SIS_PGI_2"/>
</dbReference>
<dbReference type="NCBIfam" id="NF001211">
    <property type="entry name" value="PRK00179.1"/>
    <property type="match status" value="1"/>
</dbReference>
<dbReference type="PANTHER" id="PTHR11469">
    <property type="entry name" value="GLUCOSE-6-PHOSPHATE ISOMERASE"/>
    <property type="match status" value="1"/>
</dbReference>
<dbReference type="PANTHER" id="PTHR11469:SF1">
    <property type="entry name" value="GLUCOSE-6-PHOSPHATE ISOMERASE"/>
    <property type="match status" value="1"/>
</dbReference>
<dbReference type="Pfam" id="PF00342">
    <property type="entry name" value="PGI"/>
    <property type="match status" value="1"/>
</dbReference>
<dbReference type="PRINTS" id="PR00662">
    <property type="entry name" value="G6PISOMERASE"/>
</dbReference>
<dbReference type="SUPFAM" id="SSF53697">
    <property type="entry name" value="SIS domain"/>
    <property type="match status" value="1"/>
</dbReference>
<dbReference type="PROSITE" id="PS00765">
    <property type="entry name" value="P_GLUCOSE_ISOMERASE_1"/>
    <property type="match status" value="1"/>
</dbReference>
<dbReference type="PROSITE" id="PS00174">
    <property type="entry name" value="P_GLUCOSE_ISOMERASE_2"/>
    <property type="match status" value="1"/>
</dbReference>
<dbReference type="PROSITE" id="PS51463">
    <property type="entry name" value="P_GLUCOSE_ISOMERASE_3"/>
    <property type="match status" value="1"/>
</dbReference>
<reference key="1">
    <citation type="submission" date="2008-01" db="EMBL/GenBank/DDBJ databases">
        <title>Complete sequence of Shewanella halifaxensis HAW-EB4.</title>
        <authorList>
            <consortium name="US DOE Joint Genome Institute"/>
            <person name="Copeland A."/>
            <person name="Lucas S."/>
            <person name="Lapidus A."/>
            <person name="Glavina del Rio T."/>
            <person name="Dalin E."/>
            <person name="Tice H."/>
            <person name="Bruce D."/>
            <person name="Goodwin L."/>
            <person name="Pitluck S."/>
            <person name="Sims D."/>
            <person name="Brettin T."/>
            <person name="Detter J.C."/>
            <person name="Han C."/>
            <person name="Kuske C.R."/>
            <person name="Schmutz J."/>
            <person name="Larimer F."/>
            <person name="Land M."/>
            <person name="Hauser L."/>
            <person name="Kyrpides N."/>
            <person name="Kim E."/>
            <person name="Zhao J.-S."/>
            <person name="Richardson P."/>
        </authorList>
    </citation>
    <scope>NUCLEOTIDE SEQUENCE [LARGE SCALE GENOMIC DNA]</scope>
    <source>
        <strain>HAW-EB4</strain>
    </source>
</reference>
<evidence type="ECO:0000255" key="1">
    <source>
        <dbReference type="HAMAP-Rule" id="MF_00473"/>
    </source>
</evidence>
<sequence>MTELTQQATWQALEKHSKTLSHMRELFSTEPQRFNDMSTQACGLFLDYSKNRASQETMSLLFKLAKDTQLESKIKAMFAGEAINNTEQRAVLHTALRAPADKVIIVDGNNIVAEVQQTLAKMSEFVESLTSGSWKGYTGKAITDVVSIGIGGSFLGPKIVSQALRPYWTGELNCHFVANVDGTSITEKLKGLDPQTTLFVMSSKSFGTQETLTNTLTAKAWFLGQGASQSDVAKHFVAVSSNVAKATEFGIDADNIFPMWDWVGGRYSLWSAIGLPIALLIGMDNFRELLAGAHEMDEHFANTPLEDNMPVIMGLFSLWYGNFFNAQSHVVLTYDHYLRGLPAYFQQLDMESNGKSVTLNGTDVDYSTGPVIWGGEGTNGQHAYHQLLHQGTALIPADFIMPLNSHNPVGEHHVQLASNCFGQTQALMQGRTYEEALAELSSSSLNDEQKQLIAKHKVMPGNKPSNTILMDKLTPSTLGALIALYEHRTFVQGAIWQINSFDQWGVELGKQLGNDVLDRLTASKDADELDTSSNGLINLFRQGNI</sequence>
<organism>
    <name type="scientific">Shewanella halifaxensis (strain HAW-EB4)</name>
    <dbReference type="NCBI Taxonomy" id="458817"/>
    <lineage>
        <taxon>Bacteria</taxon>
        <taxon>Pseudomonadati</taxon>
        <taxon>Pseudomonadota</taxon>
        <taxon>Gammaproteobacteria</taxon>
        <taxon>Alteromonadales</taxon>
        <taxon>Shewanellaceae</taxon>
        <taxon>Shewanella</taxon>
    </lineage>
</organism>
<comment type="function">
    <text evidence="1">Catalyzes the reversible isomerization of glucose-6-phosphate to fructose-6-phosphate.</text>
</comment>
<comment type="catalytic activity">
    <reaction evidence="1">
        <text>alpha-D-glucose 6-phosphate = beta-D-fructose 6-phosphate</text>
        <dbReference type="Rhea" id="RHEA:11816"/>
        <dbReference type="ChEBI" id="CHEBI:57634"/>
        <dbReference type="ChEBI" id="CHEBI:58225"/>
        <dbReference type="EC" id="5.3.1.9"/>
    </reaction>
</comment>
<comment type="pathway">
    <text evidence="1">Carbohydrate biosynthesis; gluconeogenesis.</text>
</comment>
<comment type="pathway">
    <text evidence="1">Carbohydrate degradation; glycolysis; D-glyceraldehyde 3-phosphate and glycerone phosphate from D-glucose: step 2/4.</text>
</comment>
<comment type="subcellular location">
    <subcellularLocation>
        <location evidence="1">Cytoplasm</location>
    </subcellularLocation>
</comment>
<comment type="similarity">
    <text evidence="1">Belongs to the GPI family.</text>
</comment>
<proteinExistence type="inferred from homology"/>
<keyword id="KW-0963">Cytoplasm</keyword>
<keyword id="KW-0312">Gluconeogenesis</keyword>
<keyword id="KW-0324">Glycolysis</keyword>
<keyword id="KW-0413">Isomerase</keyword>
<feature type="chain" id="PRO_1000081249" description="Glucose-6-phosphate isomerase">
    <location>
        <begin position="1"/>
        <end position="545"/>
    </location>
</feature>
<feature type="active site" description="Proton donor" evidence="1">
    <location>
        <position position="351"/>
    </location>
</feature>
<feature type="active site" evidence="1">
    <location>
        <position position="382"/>
    </location>
</feature>
<feature type="active site" evidence="1">
    <location>
        <position position="510"/>
    </location>
</feature>